<name>ALBE_BACIU</name>
<evidence type="ECO:0000250" key="1"/>
<organism>
    <name type="scientific">Bacillus subtilis</name>
    <dbReference type="NCBI Taxonomy" id="1423"/>
    <lineage>
        <taxon>Bacteria</taxon>
        <taxon>Bacillati</taxon>
        <taxon>Bacillota</taxon>
        <taxon>Bacilli</taxon>
        <taxon>Bacillales</taxon>
        <taxon>Bacillaceae</taxon>
        <taxon>Bacillus</taxon>
    </lineage>
</organism>
<sequence length="386" mass="43300">MAVNLLKTQQFSTISIAASFLKPIESAAEPEEETIYFYSAAAHLKQQIIDAFGYAAGCRFMYSANLFFDQQLKTCGTRLIHPSFNKNLHLDALMKTFADMSFPSSLSADAVEKAKDELLLKIEKKFADPFSYSAARLAEEAFGNPMYGTAMFGRKDRIQAIHPQRFLNATDFIVDLLSQHKQLNILGHVQACDIPGHASQTSAVTAGRFLVNRHVFETETRSAAGPSVLTLGFDCGEMKDASDYIKIQLIDGLLGKYGHSALFKHFREKDLAVYHVITRYDIMNNLLLVSICTNQLHEKEIPPRVLEAVSHFSADERELEQAKQFFRNEMLLQFDSPEGLLAYMGILRRFSCTKEDLLDGISAVTCRDVLQFITTINYIGAHVVRG</sequence>
<accession>Q8RKH3</accession>
<comment type="function">
    <text evidence="1">Involved in the production of the bacteriocin subtilosin.</text>
</comment>
<protein>
    <recommendedName>
        <fullName>Antilisterial bacteriocin subtilosin biosynthesis protein AlbE</fullName>
    </recommendedName>
</protein>
<gene>
    <name type="primary">albE</name>
</gene>
<proteinExistence type="inferred from homology"/>
<dbReference type="EMBL" id="AJ430547">
    <property type="protein sequence ID" value="CAD23203.1"/>
    <property type="molecule type" value="Genomic_DNA"/>
</dbReference>
<dbReference type="SMR" id="Q8RKH3"/>
<dbReference type="STRING" id="483913.AN935_18935"/>
<dbReference type="GO" id="GO:0046872">
    <property type="term" value="F:metal ion binding"/>
    <property type="evidence" value="ECO:0007669"/>
    <property type="project" value="InterPro"/>
</dbReference>
<dbReference type="GO" id="GO:0030152">
    <property type="term" value="P:bacteriocin biosynthetic process"/>
    <property type="evidence" value="ECO:0007669"/>
    <property type="project" value="UniProtKB-KW"/>
</dbReference>
<dbReference type="Gene3D" id="3.30.830.10">
    <property type="entry name" value="Metalloenzyme, LuxS/M16 peptidase-like"/>
    <property type="match status" value="2"/>
</dbReference>
<dbReference type="InterPro" id="IPR011249">
    <property type="entry name" value="Metalloenz_LuxS/M16"/>
</dbReference>
<dbReference type="InterPro" id="IPR007863">
    <property type="entry name" value="Peptidase_M16_C"/>
</dbReference>
<dbReference type="Pfam" id="PF05193">
    <property type="entry name" value="Peptidase_M16_C"/>
    <property type="match status" value="1"/>
</dbReference>
<dbReference type="SUPFAM" id="SSF63411">
    <property type="entry name" value="LuxS/MPP-like metallohydrolase"/>
    <property type="match status" value="2"/>
</dbReference>
<reference key="1">
    <citation type="submission" date="2002-02" db="EMBL/GenBank/DDBJ databases">
        <title>Subtilosin A biosynthesis is conserved among two different classes of Bacillus subtilis strains.</title>
        <authorList>
            <person name="Stein T."/>
            <person name="Duesterhus S."/>
            <person name="Entian K.-D."/>
        </authorList>
    </citation>
    <scope>NUCLEOTIDE SEQUENCE [GENOMIC DNA]</scope>
    <source>
        <strain>ATCC 6633 / PCI 219 / NRS 231</strain>
    </source>
</reference>
<keyword id="KW-0045">Antibiotic biosynthesis</keyword>
<keyword id="KW-0871">Bacteriocin biosynthesis</keyword>
<feature type="chain" id="PRO_0000064547" description="Antilisterial bacteriocin subtilosin biosynthesis protein AlbE">
    <location>
        <begin position="1"/>
        <end position="386"/>
    </location>
</feature>